<feature type="chain" id="PRO_0000429770" description="Cyclin-dependent kinase G1">
    <location>
        <begin position="1"/>
        <end position="612"/>
    </location>
</feature>
<feature type="domain" description="Protein kinase" evidence="3">
    <location>
        <begin position="297"/>
        <end position="593"/>
    </location>
</feature>
<feature type="region of interest" description="Disordered" evidence="5">
    <location>
        <begin position="26"/>
        <end position="60"/>
    </location>
</feature>
<feature type="region of interest" description="Disordered" evidence="5">
    <location>
        <begin position="239"/>
        <end position="278"/>
    </location>
</feature>
<feature type="compositionally biased region" description="Basic and acidic residues" evidence="5">
    <location>
        <begin position="26"/>
        <end position="54"/>
    </location>
</feature>
<feature type="active site" description="Proton acceptor" evidence="3 4">
    <location>
        <position position="426"/>
    </location>
</feature>
<feature type="binding site" evidence="3">
    <location>
        <begin position="303"/>
        <end position="311"/>
    </location>
    <ligand>
        <name>ATP</name>
        <dbReference type="ChEBI" id="CHEBI:30616"/>
    </ligand>
</feature>
<feature type="binding site" evidence="3">
    <location>
        <position position="326"/>
    </location>
    <ligand>
        <name>ATP</name>
        <dbReference type="ChEBI" id="CHEBI:30616"/>
    </ligand>
</feature>
<feature type="modified residue" description="Phosphotyrosine" evidence="1">
    <location>
        <position position="308"/>
    </location>
</feature>
<feature type="modified residue" description="Phosphoserine" evidence="2">
    <location>
        <position position="453"/>
    </location>
</feature>
<feature type="modified residue" description="Phosphothreonine" evidence="2">
    <location>
        <position position="459"/>
    </location>
</feature>
<feature type="splice variant" id="VSP_055206" description="In isoform 2." evidence="8">
    <location>
        <begin position="1"/>
        <end position="134"/>
    </location>
</feature>
<feature type="sequence conflict" description="In Ref. 4; BAE98634." evidence="8" ref="4">
    <original>F</original>
    <variation>L</variation>
    <location>
        <position position="593"/>
    </location>
</feature>
<proteinExistence type="evidence at protein level"/>
<evidence type="ECO:0000250" key="1">
    <source>
        <dbReference type="UniProtKB" id="P24100"/>
    </source>
</evidence>
<evidence type="ECO:0000250" key="2">
    <source>
        <dbReference type="UniProtKB" id="Q9C9M7"/>
    </source>
</evidence>
<evidence type="ECO:0000255" key="3">
    <source>
        <dbReference type="PROSITE-ProRule" id="PRU00159"/>
    </source>
</evidence>
<evidence type="ECO:0000255" key="4">
    <source>
        <dbReference type="PROSITE-ProRule" id="PRU10027"/>
    </source>
</evidence>
<evidence type="ECO:0000256" key="5">
    <source>
        <dbReference type="SAM" id="MobiDB-lite"/>
    </source>
</evidence>
<evidence type="ECO:0000269" key="6">
    <source>
    </source>
</evidence>
<evidence type="ECO:0000269" key="7">
    <source>
    </source>
</evidence>
<evidence type="ECO:0000305" key="8"/>
<dbReference type="EC" id="2.7.11.22"/>
<dbReference type="EMBL" id="AB023035">
    <property type="protein sequence ID" value="BAB10741.1"/>
    <property type="molecule type" value="Genomic_DNA"/>
</dbReference>
<dbReference type="EMBL" id="CP002688">
    <property type="protein sequence ID" value="AED97737.1"/>
    <property type="molecule type" value="Genomic_DNA"/>
</dbReference>
<dbReference type="EMBL" id="CP002688">
    <property type="protein sequence ID" value="AED97738.1"/>
    <property type="molecule type" value="Genomic_DNA"/>
</dbReference>
<dbReference type="EMBL" id="CP002688">
    <property type="protein sequence ID" value="AED97739.1"/>
    <property type="molecule type" value="Genomic_DNA"/>
</dbReference>
<dbReference type="EMBL" id="CP002688">
    <property type="protein sequence ID" value="AED97740.1"/>
    <property type="molecule type" value="Genomic_DNA"/>
</dbReference>
<dbReference type="EMBL" id="CP002688">
    <property type="protein sequence ID" value="ANM69859.1"/>
    <property type="molecule type" value="Genomic_DNA"/>
</dbReference>
<dbReference type="EMBL" id="CP002688">
    <property type="protein sequence ID" value="ANM69860.1"/>
    <property type="molecule type" value="Genomic_DNA"/>
</dbReference>
<dbReference type="EMBL" id="CP002688">
    <property type="protein sequence ID" value="ANM69862.1"/>
    <property type="molecule type" value="Genomic_DNA"/>
</dbReference>
<dbReference type="EMBL" id="AY060555">
    <property type="protein sequence ID" value="AAL31185.1"/>
    <property type="molecule type" value="mRNA"/>
</dbReference>
<dbReference type="EMBL" id="AY062461">
    <property type="protein sequence ID" value="AAL32539.1"/>
    <property type="molecule type" value="mRNA"/>
</dbReference>
<dbReference type="EMBL" id="AY093285">
    <property type="protein sequence ID" value="AAM13284.1"/>
    <property type="molecule type" value="mRNA"/>
</dbReference>
<dbReference type="EMBL" id="AY141988">
    <property type="protein sequence ID" value="AAM98252.1"/>
    <property type="molecule type" value="mRNA"/>
</dbReference>
<dbReference type="EMBL" id="AK226492">
    <property type="protein sequence ID" value="BAE98634.1"/>
    <property type="molecule type" value="mRNA"/>
</dbReference>
<dbReference type="RefSeq" id="NP_001119484.1">
    <molecule id="Q9FGW5-2"/>
    <property type="nucleotide sequence ID" value="NM_001126012.2"/>
</dbReference>
<dbReference type="RefSeq" id="NP_001119485.1">
    <molecule id="Q9FGW5-2"/>
    <property type="nucleotide sequence ID" value="NM_001126013.2"/>
</dbReference>
<dbReference type="RefSeq" id="NP_001190605.1">
    <molecule id="Q9FGW5-1"/>
    <property type="nucleotide sequence ID" value="NM_001203676.2"/>
</dbReference>
<dbReference type="RefSeq" id="NP_001331507.1">
    <molecule id="Q9FGW5-1"/>
    <property type="nucleotide sequence ID" value="NM_001345588.1"/>
</dbReference>
<dbReference type="RefSeq" id="NP_001331508.1">
    <molecule id="Q9FGW5-1"/>
    <property type="nucleotide sequence ID" value="NM_001345587.1"/>
</dbReference>
<dbReference type="RefSeq" id="NP_001331510.1">
    <molecule id="Q9FGW5-1"/>
    <property type="nucleotide sequence ID" value="NM_001345589.1"/>
</dbReference>
<dbReference type="RefSeq" id="NP_201142.1">
    <molecule id="Q9FGW5-1"/>
    <property type="nucleotide sequence ID" value="NM_125732.3"/>
</dbReference>
<dbReference type="SMR" id="Q9FGW5"/>
<dbReference type="BioGRID" id="21699">
    <property type="interactions" value="7"/>
</dbReference>
<dbReference type="FunCoup" id="Q9FGW5">
    <property type="interactions" value="3973"/>
</dbReference>
<dbReference type="IntAct" id="Q9FGW5">
    <property type="interactions" value="6"/>
</dbReference>
<dbReference type="STRING" id="3702.Q9FGW5"/>
<dbReference type="iPTMnet" id="Q9FGW5"/>
<dbReference type="PaxDb" id="3702-AT5G63370.1"/>
<dbReference type="ProteomicsDB" id="223979">
    <molecule id="Q9FGW5-1"/>
</dbReference>
<dbReference type="EnsemblPlants" id="AT5G63370.1">
    <molecule id="Q9FGW5-1"/>
    <property type="protein sequence ID" value="AT5G63370.1"/>
    <property type="gene ID" value="AT5G63370"/>
</dbReference>
<dbReference type="EnsemblPlants" id="AT5G63370.2">
    <molecule id="Q9FGW5-2"/>
    <property type="protein sequence ID" value="AT5G63370.2"/>
    <property type="gene ID" value="AT5G63370"/>
</dbReference>
<dbReference type="EnsemblPlants" id="AT5G63370.3">
    <molecule id="Q9FGW5-2"/>
    <property type="protein sequence ID" value="AT5G63370.3"/>
    <property type="gene ID" value="AT5G63370"/>
</dbReference>
<dbReference type="EnsemblPlants" id="AT5G63370.4">
    <molecule id="Q9FGW5-1"/>
    <property type="protein sequence ID" value="AT5G63370.4"/>
    <property type="gene ID" value="AT5G63370"/>
</dbReference>
<dbReference type="EnsemblPlants" id="AT5G63370.6">
    <molecule id="Q9FGW5-1"/>
    <property type="protein sequence ID" value="AT5G63370.6"/>
    <property type="gene ID" value="AT5G63370"/>
</dbReference>
<dbReference type="EnsemblPlants" id="AT5G63370.7">
    <molecule id="Q9FGW5-1"/>
    <property type="protein sequence ID" value="AT5G63370.7"/>
    <property type="gene ID" value="AT5G63370"/>
</dbReference>
<dbReference type="EnsemblPlants" id="AT5G63370.8">
    <molecule id="Q9FGW5-1"/>
    <property type="protein sequence ID" value="AT5G63370.8"/>
    <property type="gene ID" value="AT5G63370"/>
</dbReference>
<dbReference type="GeneID" id="836456"/>
<dbReference type="Gramene" id="AT5G63370.1">
    <molecule id="Q9FGW5-1"/>
    <property type="protein sequence ID" value="AT5G63370.1"/>
    <property type="gene ID" value="AT5G63370"/>
</dbReference>
<dbReference type="Gramene" id="AT5G63370.2">
    <molecule id="Q9FGW5-2"/>
    <property type="protein sequence ID" value="AT5G63370.2"/>
    <property type="gene ID" value="AT5G63370"/>
</dbReference>
<dbReference type="Gramene" id="AT5G63370.3">
    <molecule id="Q9FGW5-2"/>
    <property type="protein sequence ID" value="AT5G63370.3"/>
    <property type="gene ID" value="AT5G63370"/>
</dbReference>
<dbReference type="Gramene" id="AT5G63370.4">
    <molecule id="Q9FGW5-1"/>
    <property type="protein sequence ID" value="AT5G63370.4"/>
    <property type="gene ID" value="AT5G63370"/>
</dbReference>
<dbReference type="Gramene" id="AT5G63370.6">
    <molecule id="Q9FGW5-1"/>
    <property type="protein sequence ID" value="AT5G63370.6"/>
    <property type="gene ID" value="AT5G63370"/>
</dbReference>
<dbReference type="Gramene" id="AT5G63370.7">
    <molecule id="Q9FGW5-1"/>
    <property type="protein sequence ID" value="AT5G63370.7"/>
    <property type="gene ID" value="AT5G63370"/>
</dbReference>
<dbReference type="Gramene" id="AT5G63370.8">
    <molecule id="Q9FGW5-1"/>
    <property type="protein sequence ID" value="AT5G63370.8"/>
    <property type="gene ID" value="AT5G63370"/>
</dbReference>
<dbReference type="KEGG" id="ath:AT5G63370"/>
<dbReference type="Araport" id="AT5G63370"/>
<dbReference type="TAIR" id="AT5G63370">
    <property type="gene designation" value="CDKG1"/>
</dbReference>
<dbReference type="eggNOG" id="KOG0663">
    <property type="taxonomic scope" value="Eukaryota"/>
</dbReference>
<dbReference type="InParanoid" id="Q9FGW5"/>
<dbReference type="PhylomeDB" id="Q9FGW5"/>
<dbReference type="PRO" id="PR:Q9FGW5"/>
<dbReference type="Proteomes" id="UP000006548">
    <property type="component" value="Chromosome 5"/>
</dbReference>
<dbReference type="ExpressionAtlas" id="Q9FGW5">
    <property type="expression patterns" value="baseline and differential"/>
</dbReference>
<dbReference type="GO" id="GO:0016607">
    <property type="term" value="C:nuclear speck"/>
    <property type="evidence" value="ECO:0007669"/>
    <property type="project" value="UniProtKB-SubCell"/>
</dbReference>
<dbReference type="GO" id="GO:0005634">
    <property type="term" value="C:nucleus"/>
    <property type="evidence" value="ECO:0000314"/>
    <property type="project" value="TAIR"/>
</dbReference>
<dbReference type="GO" id="GO:0005681">
    <property type="term" value="C:spliceosomal complex"/>
    <property type="evidence" value="ECO:0007669"/>
    <property type="project" value="UniProtKB-KW"/>
</dbReference>
<dbReference type="GO" id="GO:0005524">
    <property type="term" value="F:ATP binding"/>
    <property type="evidence" value="ECO:0007669"/>
    <property type="project" value="UniProtKB-KW"/>
</dbReference>
<dbReference type="GO" id="GO:0004693">
    <property type="term" value="F:cyclin-dependent protein serine/threonine kinase activity"/>
    <property type="evidence" value="ECO:0007669"/>
    <property type="project" value="UniProtKB-EC"/>
</dbReference>
<dbReference type="GO" id="GO:0106310">
    <property type="term" value="F:protein serine kinase activity"/>
    <property type="evidence" value="ECO:0007669"/>
    <property type="project" value="RHEA"/>
</dbReference>
<dbReference type="GO" id="GO:0051321">
    <property type="term" value="P:meiotic cell cycle"/>
    <property type="evidence" value="ECO:0007669"/>
    <property type="project" value="UniProtKB-KW"/>
</dbReference>
<dbReference type="GO" id="GO:0000398">
    <property type="term" value="P:mRNA splicing, via spliceosome"/>
    <property type="evidence" value="ECO:0000315"/>
    <property type="project" value="TAIR"/>
</dbReference>
<dbReference type="GO" id="GO:0010584">
    <property type="term" value="P:pollen exine formation"/>
    <property type="evidence" value="ECO:0000315"/>
    <property type="project" value="TAIR"/>
</dbReference>
<dbReference type="GO" id="GO:0032953">
    <property type="term" value="P:regulation of (1-&gt;3)-beta-D-glucan biosynthetic process"/>
    <property type="evidence" value="ECO:0000315"/>
    <property type="project" value="TAIR"/>
</dbReference>
<dbReference type="CDD" id="cd07843">
    <property type="entry name" value="STKc_CDC2L1"/>
    <property type="match status" value="1"/>
</dbReference>
<dbReference type="FunFam" id="1.10.510.10:FF:000211">
    <property type="entry name" value="Cyclin-dependent kinase G-2"/>
    <property type="match status" value="1"/>
</dbReference>
<dbReference type="FunFam" id="3.30.200.20:FF:000172">
    <property type="entry name" value="cyclin-dependent kinase G-2 isoform X1"/>
    <property type="match status" value="1"/>
</dbReference>
<dbReference type="Gene3D" id="3.30.200.20">
    <property type="entry name" value="Phosphorylase Kinase, domain 1"/>
    <property type="match status" value="1"/>
</dbReference>
<dbReference type="Gene3D" id="1.10.510.10">
    <property type="entry name" value="Transferase(Phosphotransferase) domain 1"/>
    <property type="match status" value="1"/>
</dbReference>
<dbReference type="InterPro" id="IPR050108">
    <property type="entry name" value="CDK"/>
</dbReference>
<dbReference type="InterPro" id="IPR045267">
    <property type="entry name" value="CDK11/PITSLRE_STKc"/>
</dbReference>
<dbReference type="InterPro" id="IPR011009">
    <property type="entry name" value="Kinase-like_dom_sf"/>
</dbReference>
<dbReference type="InterPro" id="IPR000719">
    <property type="entry name" value="Prot_kinase_dom"/>
</dbReference>
<dbReference type="InterPro" id="IPR008271">
    <property type="entry name" value="Ser/Thr_kinase_AS"/>
</dbReference>
<dbReference type="PANTHER" id="PTHR24056">
    <property type="entry name" value="CELL DIVISION PROTEIN KINASE"/>
    <property type="match status" value="1"/>
</dbReference>
<dbReference type="PANTHER" id="PTHR24056:SF415">
    <property type="entry name" value="CYCLIN-DEPENDENT KINASE G1"/>
    <property type="match status" value="1"/>
</dbReference>
<dbReference type="Pfam" id="PF00069">
    <property type="entry name" value="Pkinase"/>
    <property type="match status" value="1"/>
</dbReference>
<dbReference type="SMART" id="SM00220">
    <property type="entry name" value="S_TKc"/>
    <property type="match status" value="1"/>
</dbReference>
<dbReference type="SUPFAM" id="SSF56112">
    <property type="entry name" value="Protein kinase-like (PK-like)"/>
    <property type="match status" value="1"/>
</dbReference>
<dbReference type="PROSITE" id="PS50011">
    <property type="entry name" value="PROTEIN_KINASE_DOM"/>
    <property type="match status" value="1"/>
</dbReference>
<dbReference type="PROSITE" id="PS00108">
    <property type="entry name" value="PROTEIN_KINASE_ST"/>
    <property type="match status" value="1"/>
</dbReference>
<reference key="1">
    <citation type="journal article" date="2000" name="DNA Res.">
        <title>Structural analysis of Arabidopsis thaliana chromosome 5. X. Sequence features of the regions of 3,076,755 bp covered by sixty P1 and TAC clones.</title>
        <authorList>
            <person name="Sato S."/>
            <person name="Nakamura Y."/>
            <person name="Kaneko T."/>
            <person name="Katoh T."/>
            <person name="Asamizu E."/>
            <person name="Kotani H."/>
            <person name="Tabata S."/>
        </authorList>
    </citation>
    <scope>NUCLEOTIDE SEQUENCE [LARGE SCALE GENOMIC DNA]</scope>
    <source>
        <strain>cv. Columbia</strain>
    </source>
</reference>
<reference key="2">
    <citation type="journal article" date="2017" name="Plant J.">
        <title>Araport11: a complete reannotation of the Arabidopsis thaliana reference genome.</title>
        <authorList>
            <person name="Cheng C.Y."/>
            <person name="Krishnakumar V."/>
            <person name="Chan A.P."/>
            <person name="Thibaud-Nissen F."/>
            <person name="Schobel S."/>
            <person name="Town C.D."/>
        </authorList>
    </citation>
    <scope>GENOME REANNOTATION</scope>
    <source>
        <strain>cv. Columbia</strain>
    </source>
</reference>
<reference key="3">
    <citation type="journal article" date="2003" name="Science">
        <title>Empirical analysis of transcriptional activity in the Arabidopsis genome.</title>
        <authorList>
            <person name="Yamada K."/>
            <person name="Lim J."/>
            <person name="Dale J.M."/>
            <person name="Chen H."/>
            <person name="Shinn P."/>
            <person name="Palm C.J."/>
            <person name="Southwick A.M."/>
            <person name="Wu H.C."/>
            <person name="Kim C.J."/>
            <person name="Nguyen M."/>
            <person name="Pham P.K."/>
            <person name="Cheuk R.F."/>
            <person name="Karlin-Newmann G."/>
            <person name="Liu S.X."/>
            <person name="Lam B."/>
            <person name="Sakano H."/>
            <person name="Wu T."/>
            <person name="Yu G."/>
            <person name="Miranda M."/>
            <person name="Quach H.L."/>
            <person name="Tripp M."/>
            <person name="Chang C.H."/>
            <person name="Lee J.M."/>
            <person name="Toriumi M.J."/>
            <person name="Chan M.M."/>
            <person name="Tang C.C."/>
            <person name="Onodera C.S."/>
            <person name="Deng J.M."/>
            <person name="Akiyama K."/>
            <person name="Ansari Y."/>
            <person name="Arakawa T."/>
            <person name="Banh J."/>
            <person name="Banno F."/>
            <person name="Bowser L."/>
            <person name="Brooks S.Y."/>
            <person name="Carninci P."/>
            <person name="Chao Q."/>
            <person name="Choy N."/>
            <person name="Enju A."/>
            <person name="Goldsmith A.D."/>
            <person name="Gurjal M."/>
            <person name="Hansen N.F."/>
            <person name="Hayashizaki Y."/>
            <person name="Johnson-Hopson C."/>
            <person name="Hsuan V.W."/>
            <person name="Iida K."/>
            <person name="Karnes M."/>
            <person name="Khan S."/>
            <person name="Koesema E."/>
            <person name="Ishida J."/>
            <person name="Jiang P.X."/>
            <person name="Jones T."/>
            <person name="Kawai J."/>
            <person name="Kamiya A."/>
            <person name="Meyers C."/>
            <person name="Nakajima M."/>
            <person name="Narusaka M."/>
            <person name="Seki M."/>
            <person name="Sakurai T."/>
            <person name="Satou M."/>
            <person name="Tamse R."/>
            <person name="Vaysberg M."/>
            <person name="Wallender E.K."/>
            <person name="Wong C."/>
            <person name="Yamamura Y."/>
            <person name="Yuan S."/>
            <person name="Shinozaki K."/>
            <person name="Davis R.W."/>
            <person name="Theologis A."/>
            <person name="Ecker J.R."/>
        </authorList>
    </citation>
    <scope>NUCLEOTIDE SEQUENCE [LARGE SCALE MRNA] (ISOFORM 1)</scope>
    <source>
        <strain>cv. Columbia</strain>
    </source>
</reference>
<reference key="4">
    <citation type="submission" date="2006-07" db="EMBL/GenBank/DDBJ databases">
        <title>Large-scale analysis of RIKEN Arabidopsis full-length (RAFL) cDNAs.</title>
        <authorList>
            <person name="Totoki Y."/>
            <person name="Seki M."/>
            <person name="Ishida J."/>
            <person name="Nakajima M."/>
            <person name="Enju A."/>
            <person name="Kamiya A."/>
            <person name="Narusaka M."/>
            <person name="Shin-i T."/>
            <person name="Nakagawa M."/>
            <person name="Sakamoto N."/>
            <person name="Oishi K."/>
            <person name="Kohara Y."/>
            <person name="Kobayashi M."/>
            <person name="Toyoda A."/>
            <person name="Sakaki Y."/>
            <person name="Sakurai T."/>
            <person name="Iida K."/>
            <person name="Akiyama K."/>
            <person name="Satou M."/>
            <person name="Toyoda T."/>
            <person name="Konagaya A."/>
            <person name="Carninci P."/>
            <person name="Kawai J."/>
            <person name="Hayashizaki Y."/>
            <person name="Shinozaki K."/>
        </authorList>
    </citation>
    <scope>NUCLEOTIDE SEQUENCE [LARGE SCALE MRNA] OF 565-612</scope>
    <source>
        <strain>cv. Columbia</strain>
    </source>
</reference>
<reference key="5">
    <citation type="journal article" date="2013" name="Plant Cell">
        <title>CYCLIN-DEPENDENT KINASE G1 is associated with the spliceosome to regulate CALLOSE SYNTHASE5 splicing and pollen wall formation in Arabidopsis.</title>
        <authorList>
            <person name="Huang X.Y."/>
            <person name="Niu J."/>
            <person name="Sun M.X."/>
            <person name="Zhu J."/>
            <person name="Gao J.F."/>
            <person name="Yang J."/>
            <person name="Zhou Q."/>
            <person name="Yang Z.N."/>
        </authorList>
    </citation>
    <scope>FUNCTION</scope>
    <scope>DISRUPTION PHENOTYPE</scope>
    <scope>INTERACTION WITH RS2Z33</scope>
    <scope>SUBCELLULAR LOCATION</scope>
    <scope>TISSUE SPECIFICITY</scope>
    <source>
        <strain>cv. Columbia</strain>
    </source>
</reference>
<reference key="6">
    <citation type="journal article" date="2014" name="Proc. Natl. Acad. Sci. U.S.A.">
        <title>CDKG1 protein kinase is essential for synapsis and male meiosis at high ambient temperature in Arabidopsis thaliana.</title>
        <authorList>
            <person name="Zheng T."/>
            <person name="Nibau C."/>
            <person name="Phillips D.W."/>
            <person name="Jenkins G."/>
            <person name="Armstrong S.J."/>
            <person name="Doonan J.H."/>
        </authorList>
    </citation>
    <scope>FUNCTION</scope>
    <scope>DISRUPTION PHENOTYPE</scope>
    <scope>INTERACTION WITH CYCL1-1</scope>
    <source>
        <strain>cv. Columbia</strain>
    </source>
</reference>
<keyword id="KW-0025">Alternative splicing</keyword>
<keyword id="KW-0067">ATP-binding</keyword>
<keyword id="KW-0418">Kinase</keyword>
<keyword id="KW-0469">Meiosis</keyword>
<keyword id="KW-0507">mRNA processing</keyword>
<keyword id="KW-0508">mRNA splicing</keyword>
<keyword id="KW-0547">Nucleotide-binding</keyword>
<keyword id="KW-0539">Nucleus</keyword>
<keyword id="KW-0597">Phosphoprotein</keyword>
<keyword id="KW-1185">Reference proteome</keyword>
<keyword id="KW-0723">Serine/threonine-protein kinase</keyword>
<keyword id="KW-0747">Spliceosome</keyword>
<keyword id="KW-0808">Transferase</keyword>
<name>CDKG1_ARATH</name>
<organism>
    <name type="scientific">Arabidopsis thaliana</name>
    <name type="common">Mouse-ear cress</name>
    <dbReference type="NCBI Taxonomy" id="3702"/>
    <lineage>
        <taxon>Eukaryota</taxon>
        <taxon>Viridiplantae</taxon>
        <taxon>Streptophyta</taxon>
        <taxon>Embryophyta</taxon>
        <taxon>Tracheophyta</taxon>
        <taxon>Spermatophyta</taxon>
        <taxon>Magnoliopsida</taxon>
        <taxon>eudicotyledons</taxon>
        <taxon>Gunneridae</taxon>
        <taxon>Pentapetalae</taxon>
        <taxon>rosids</taxon>
        <taxon>malvids</taxon>
        <taxon>Brassicales</taxon>
        <taxon>Brassicaceae</taxon>
        <taxon>Camelineae</taxon>
        <taxon>Arabidopsis</taxon>
    </lineage>
</organism>
<comment type="function">
    <text evidence="6 7">Cyclin-dependent kinase involved in pre-mRNA splicing. Required for the correct splicing of the sixth intron of CALS5 pre-mRNA. May stabilize the binding of U1 snRNP to this rare type of intron with a GC 5'SS. Involved in chromosome pairing and is required for the completion of synapsis in male meiocytes at high ambient temperatures.</text>
</comment>
<comment type="catalytic activity">
    <reaction>
        <text>L-seryl-[protein] + ATP = O-phospho-L-seryl-[protein] + ADP + H(+)</text>
        <dbReference type="Rhea" id="RHEA:17989"/>
        <dbReference type="Rhea" id="RHEA-COMP:9863"/>
        <dbReference type="Rhea" id="RHEA-COMP:11604"/>
        <dbReference type="ChEBI" id="CHEBI:15378"/>
        <dbReference type="ChEBI" id="CHEBI:29999"/>
        <dbReference type="ChEBI" id="CHEBI:30616"/>
        <dbReference type="ChEBI" id="CHEBI:83421"/>
        <dbReference type="ChEBI" id="CHEBI:456216"/>
        <dbReference type="EC" id="2.7.11.22"/>
    </reaction>
</comment>
<comment type="catalytic activity">
    <reaction>
        <text>L-threonyl-[protein] + ATP = O-phospho-L-threonyl-[protein] + ADP + H(+)</text>
        <dbReference type="Rhea" id="RHEA:46608"/>
        <dbReference type="Rhea" id="RHEA-COMP:11060"/>
        <dbReference type="Rhea" id="RHEA-COMP:11605"/>
        <dbReference type="ChEBI" id="CHEBI:15378"/>
        <dbReference type="ChEBI" id="CHEBI:30013"/>
        <dbReference type="ChEBI" id="CHEBI:30616"/>
        <dbReference type="ChEBI" id="CHEBI:61977"/>
        <dbReference type="ChEBI" id="CHEBI:456216"/>
        <dbReference type="EC" id="2.7.11.22"/>
    </reaction>
</comment>
<comment type="subunit">
    <text evidence="6 7">Forms a complex with CYCL1-1. Associated with the spliceosome. Interacts with RS2Z33.</text>
</comment>
<comment type="subcellular location">
    <subcellularLocation>
        <location evidence="6">Nucleus speckle</location>
    </subcellularLocation>
</comment>
<comment type="alternative products">
    <event type="alternative splicing"/>
    <isoform>
        <id>Q9FGW5-1</id>
        <name>1</name>
        <sequence type="displayed"/>
    </isoform>
    <isoform>
        <id>Q9FGW5-2</id>
        <name>2</name>
        <sequence type="described" ref="VSP_055206"/>
    </isoform>
</comment>
<comment type="tissue specificity">
    <text evidence="6">Expressed in leaves and inflorescences. Lower levels of expression in roots and stems.</text>
</comment>
<comment type="disruption phenotype">
    <text evidence="6 7">Aberrant callose deposition, defective pollen wall formation during microspore development, and severely reduced male fertility.</text>
</comment>
<comment type="similarity">
    <text evidence="3">Belongs to the protein kinase superfamily. Ser/Thr protein kinase family.</text>
</comment>
<accession>Q9FGW5</accession>
<accession>F4K9C1</accession>
<accession>Q0WW64</accession>
<sequence length="612" mass="69620">MAAGGVDVSRSSVAVKKDYDFYRNGSRDVYVRQSGRDDERRQIKRPSDHDLRRNDGRHRSRLAYEKGELREEAEVQRPSEKRRKFSPIVWNAEKVGRAPSREKTKSPFPVPTTTVISNQAVAGKTTSNDQVNALMSPEPSYLAPVQPSEALLAVKHPVDDLEEGQLEEEQVMQEDVKEGLLEEEQVMQEPNIKTSRWGTGLTSPKEELISVNVSKTNRWNRSSLTPECEEVMVSEEQQCYSSGSGSGHLSVEKLSADGNSGREYYSSDHDELEHEDQDSLTPGEMNMMFGSRSVNEFQKLNKINEGTYGIVYKARDEKTKEIVALKKIKMKEDRFEEEYGFPLTSLREINILLSCNHPAIVNVKEVVVGGKNDNDVYMVMEHLEHDLRGVMDRRKEPFSTSEVKCLMMQLLDGLKYLHTNWIIHRDLKPSNLLMNNCGELKICDFGMARQYGSPIKPYTQMVITQWYRPPELLLGAKEYSTAVDMWSVGCIMAELLSQKPLFPGKSELDQLQKIFAVLGTPNEAIWPGFSSFPNAKAKFPTQPYNMLRKKFPAISFVGGQILSERGFDLLNSLLTLDPEKRLTVEDALNHGWFHEVPLPKSKDFMPTYPPKR</sequence>
<protein>
    <recommendedName>
        <fullName>Cyclin-dependent kinase G1</fullName>
        <ecNumber>2.7.11.22</ecNumber>
    </recommendedName>
</protein>
<gene>
    <name type="primary">CDKG1</name>
    <name type="ordered locus">At5g63370</name>
    <name type="ORF">K9H21.7</name>
</gene>